<protein>
    <recommendedName>
        <fullName>AAC-rich mRNA clone AAC11 protein</fullName>
    </recommendedName>
</protein>
<proteinExistence type="evidence at transcript level"/>
<feature type="chain" id="PRO_0000206716" description="AAC-rich mRNA clone AAC11 protein">
    <location>
        <begin position="1"/>
        <end position="464"/>
    </location>
</feature>
<feature type="DNA-binding region" description="A.T hook 1">
    <location>
        <begin position="177"/>
        <end position="189"/>
    </location>
</feature>
<feature type="DNA-binding region" description="A.T hook 2">
    <location>
        <begin position="198"/>
        <end position="210"/>
    </location>
</feature>
<feature type="DNA-binding region" description="A.T hook 3">
    <location>
        <begin position="224"/>
        <end position="236"/>
    </location>
</feature>
<feature type="DNA-binding region" description="A.T hook 4">
    <location>
        <begin position="255"/>
        <end position="267"/>
    </location>
</feature>
<feature type="region of interest" description="Disordered" evidence="1">
    <location>
        <begin position="1"/>
        <end position="112"/>
    </location>
</feature>
<feature type="region of interest" description="Disordered" evidence="1">
    <location>
        <begin position="125"/>
        <end position="464"/>
    </location>
</feature>
<feature type="compositionally biased region" description="Polar residues" evidence="1">
    <location>
        <begin position="1"/>
        <end position="15"/>
    </location>
</feature>
<feature type="compositionally biased region" description="Low complexity" evidence="1">
    <location>
        <begin position="16"/>
        <end position="65"/>
    </location>
</feature>
<feature type="compositionally biased region" description="Low complexity" evidence="1">
    <location>
        <begin position="78"/>
        <end position="88"/>
    </location>
</feature>
<feature type="compositionally biased region" description="Low complexity" evidence="1">
    <location>
        <begin position="130"/>
        <end position="160"/>
    </location>
</feature>
<feature type="compositionally biased region" description="Polar residues" evidence="1">
    <location>
        <begin position="161"/>
        <end position="174"/>
    </location>
</feature>
<feature type="compositionally biased region" description="Polar residues" evidence="1">
    <location>
        <begin position="240"/>
        <end position="253"/>
    </location>
</feature>
<feature type="compositionally biased region" description="Low complexity" evidence="1">
    <location>
        <begin position="276"/>
        <end position="428"/>
    </location>
</feature>
<feature type="compositionally biased region" description="Polar residues" evidence="1">
    <location>
        <begin position="433"/>
        <end position="464"/>
    </location>
</feature>
<feature type="sequence conflict" description="In Ref. 2; CAA34529." evidence="2" ref="2">
    <original>D</original>
    <variation>E</variation>
    <location>
        <position position="267"/>
    </location>
</feature>
<dbReference type="EMBL" id="AAFI02000073">
    <property type="protein sequence ID" value="EAL64899.1"/>
    <property type="molecule type" value="Genomic_DNA"/>
</dbReference>
<dbReference type="EMBL" id="X16522">
    <property type="protein sequence ID" value="CAA34529.1"/>
    <property type="status" value="ALT_FRAME"/>
    <property type="molecule type" value="mRNA"/>
</dbReference>
<dbReference type="PIR" id="S05355">
    <property type="entry name" value="S05355"/>
</dbReference>
<dbReference type="RefSeq" id="XP_639980.1">
    <property type="nucleotide sequence ID" value="XM_634888.1"/>
</dbReference>
<dbReference type="PaxDb" id="44689-DDB0191407"/>
<dbReference type="EnsemblProtists" id="EAL64899">
    <property type="protein sequence ID" value="EAL64899"/>
    <property type="gene ID" value="DDB_G0284871"/>
</dbReference>
<dbReference type="GeneID" id="8624893"/>
<dbReference type="KEGG" id="ddi:DDB_G0284871"/>
<dbReference type="dictyBase" id="DDB_G0284871"/>
<dbReference type="VEuPathDB" id="AmoebaDB:DDB_G0284871"/>
<dbReference type="eggNOG" id="ENOG502RHZ6">
    <property type="taxonomic scope" value="Eukaryota"/>
</dbReference>
<dbReference type="HOGENOM" id="CLU_589784_0_0_1"/>
<dbReference type="InParanoid" id="P14196"/>
<dbReference type="OMA" id="NANNRRM"/>
<dbReference type="PRO" id="PR:P14196"/>
<dbReference type="Proteomes" id="UP000002195">
    <property type="component" value="Chromosome 4"/>
</dbReference>
<dbReference type="GO" id="GO:0000785">
    <property type="term" value="C:chromatin"/>
    <property type="evidence" value="ECO:0007669"/>
    <property type="project" value="InterPro"/>
</dbReference>
<dbReference type="GO" id="GO:0005634">
    <property type="term" value="C:nucleus"/>
    <property type="evidence" value="ECO:0007669"/>
    <property type="project" value="InterPro"/>
</dbReference>
<dbReference type="GO" id="GO:0003677">
    <property type="term" value="F:DNA binding"/>
    <property type="evidence" value="ECO:0007669"/>
    <property type="project" value="UniProtKB-KW"/>
</dbReference>
<dbReference type="GO" id="GO:0006355">
    <property type="term" value="P:regulation of DNA-templated transcription"/>
    <property type="evidence" value="ECO:0007669"/>
    <property type="project" value="InterPro"/>
</dbReference>
<dbReference type="InterPro" id="IPR017956">
    <property type="entry name" value="AT_hook_DNA-bd_motif"/>
</dbReference>
<dbReference type="InterPro" id="IPR000116">
    <property type="entry name" value="HMGA"/>
</dbReference>
<dbReference type="Pfam" id="PF02178">
    <property type="entry name" value="AT_hook"/>
    <property type="match status" value="4"/>
</dbReference>
<dbReference type="PRINTS" id="PR00929">
    <property type="entry name" value="ATHOOK"/>
</dbReference>
<dbReference type="PRINTS" id="PR00930">
    <property type="entry name" value="HIGHMOBLTYIY"/>
</dbReference>
<dbReference type="SMART" id="SM00384">
    <property type="entry name" value="AT_hook"/>
    <property type="match status" value="4"/>
</dbReference>
<evidence type="ECO:0000256" key="1">
    <source>
        <dbReference type="SAM" id="MobiDB-lite"/>
    </source>
</evidence>
<evidence type="ECO:0000305" key="2"/>
<sequence length="464" mass="50619">MSTPTLPNLSQLHGIQNQSLQQQQQQQPQQQQQPQQQQQQQQPQQTMQQPIQNLHQQAPQMQQPQYNLHTTLPPPLMNPNGLGLMGHNMMGGGNNGNNSGNNNGQPQMHGTNLNGLSLAIQNQSSLPQPINNNNNNNNNNSNINNNNNNSNNNNNNNNSNLGINSSPTQSSANSADKRSRGRPRKNPPSEPKDTSGPKRKRGRPPKMDEEGNPQPKPVPQPGSNKKRGRPKKPKDENESDYNNTSFSDSNTDGTPKKRGRPPKAKGDSPSASPTHNTLGNGILNSNNNNNNNNNNSNINNINNNNNNNSNNNNNSSNNNNNNNNSTNNNTNNNNNNTNNNTNNNNNNINNNNNNTNNNNNNANNQNTNNNNMGNNSNNNNNPNNNNHQNNNNNNTSNNSNTTTATTTAPGGNNLTNSLNNAGNLGNLGRVSGLHSSDPNNPNAQKSFPDSTNTMDFQPNFSFFH</sequence>
<accession>P14196</accession>
<accession>Q54NT7</accession>
<organism>
    <name type="scientific">Dictyostelium discoideum</name>
    <name type="common">Social amoeba</name>
    <dbReference type="NCBI Taxonomy" id="44689"/>
    <lineage>
        <taxon>Eukaryota</taxon>
        <taxon>Amoebozoa</taxon>
        <taxon>Evosea</taxon>
        <taxon>Eumycetozoa</taxon>
        <taxon>Dictyostelia</taxon>
        <taxon>Dictyosteliales</taxon>
        <taxon>Dictyosteliaceae</taxon>
        <taxon>Dictyostelium</taxon>
    </lineage>
</organism>
<keyword id="KW-0238">DNA-binding</keyword>
<keyword id="KW-1185">Reference proteome</keyword>
<keyword id="KW-0677">Repeat</keyword>
<reference key="1">
    <citation type="journal article" date="2005" name="Nature">
        <title>The genome of the social amoeba Dictyostelium discoideum.</title>
        <authorList>
            <person name="Eichinger L."/>
            <person name="Pachebat J.A."/>
            <person name="Gloeckner G."/>
            <person name="Rajandream M.A."/>
            <person name="Sucgang R."/>
            <person name="Berriman M."/>
            <person name="Song J."/>
            <person name="Olsen R."/>
            <person name="Szafranski K."/>
            <person name="Xu Q."/>
            <person name="Tunggal B."/>
            <person name="Kummerfeld S."/>
            <person name="Madera M."/>
            <person name="Konfortov B.A."/>
            <person name="Rivero F."/>
            <person name="Bankier A.T."/>
            <person name="Lehmann R."/>
            <person name="Hamlin N."/>
            <person name="Davies R."/>
            <person name="Gaudet P."/>
            <person name="Fey P."/>
            <person name="Pilcher K."/>
            <person name="Chen G."/>
            <person name="Saunders D."/>
            <person name="Sodergren E.J."/>
            <person name="Davis P."/>
            <person name="Kerhornou A."/>
            <person name="Nie X."/>
            <person name="Hall N."/>
            <person name="Anjard C."/>
            <person name="Hemphill L."/>
            <person name="Bason N."/>
            <person name="Farbrother P."/>
            <person name="Desany B."/>
            <person name="Just E."/>
            <person name="Morio T."/>
            <person name="Rost R."/>
            <person name="Churcher C.M."/>
            <person name="Cooper J."/>
            <person name="Haydock S."/>
            <person name="van Driessche N."/>
            <person name="Cronin A."/>
            <person name="Goodhead I."/>
            <person name="Muzny D.M."/>
            <person name="Mourier T."/>
            <person name="Pain A."/>
            <person name="Lu M."/>
            <person name="Harper D."/>
            <person name="Lindsay R."/>
            <person name="Hauser H."/>
            <person name="James K.D."/>
            <person name="Quiles M."/>
            <person name="Madan Babu M."/>
            <person name="Saito T."/>
            <person name="Buchrieser C."/>
            <person name="Wardroper A."/>
            <person name="Felder M."/>
            <person name="Thangavelu M."/>
            <person name="Johnson D."/>
            <person name="Knights A."/>
            <person name="Loulseged H."/>
            <person name="Mungall K.L."/>
            <person name="Oliver K."/>
            <person name="Price C."/>
            <person name="Quail M.A."/>
            <person name="Urushihara H."/>
            <person name="Hernandez J."/>
            <person name="Rabbinowitsch E."/>
            <person name="Steffen D."/>
            <person name="Sanders M."/>
            <person name="Ma J."/>
            <person name="Kohara Y."/>
            <person name="Sharp S."/>
            <person name="Simmonds M.N."/>
            <person name="Spiegler S."/>
            <person name="Tivey A."/>
            <person name="Sugano S."/>
            <person name="White B."/>
            <person name="Walker D."/>
            <person name="Woodward J.R."/>
            <person name="Winckler T."/>
            <person name="Tanaka Y."/>
            <person name="Shaulsky G."/>
            <person name="Schleicher M."/>
            <person name="Weinstock G.M."/>
            <person name="Rosenthal A."/>
            <person name="Cox E.C."/>
            <person name="Chisholm R.L."/>
            <person name="Gibbs R.A."/>
            <person name="Loomis W.F."/>
            <person name="Platzer M."/>
            <person name="Kay R.R."/>
            <person name="Williams J.G."/>
            <person name="Dear P.H."/>
            <person name="Noegel A.A."/>
            <person name="Barrell B.G."/>
            <person name="Kuspa A."/>
        </authorList>
    </citation>
    <scope>NUCLEOTIDE SEQUENCE [LARGE SCALE GENOMIC DNA]</scope>
    <source>
        <strain>AX4</strain>
    </source>
</reference>
<reference key="2">
    <citation type="journal article" date="1989" name="Mol. Gen. Genet.">
        <title>Nucleotide sequences of Dictyostelium discoideum developmentally regulated cDNAs rich in (AAC) imply proteins that contain clusters of asparagine, glutamine, or threonine.</title>
        <authorList>
            <person name="Shaw D.R."/>
            <person name="Richter H."/>
            <person name="Giorda R."/>
            <person name="Ohmachi T."/>
            <person name="Ennis H.L."/>
        </authorList>
    </citation>
    <scope>NUCLEOTIDE SEQUENCE [MRNA] OF 17-464</scope>
</reference>
<gene>
    <name type="primary">AAC11</name>
    <name type="ORF">DDB_G0284871</name>
</gene>
<comment type="developmental stage">
    <text>The concentration of AAC-rich mRNAs is low in dormant spores and growing cells, but increases during spore-germination and multicellular development.</text>
</comment>
<comment type="miscellaneous">
    <text>Several proteins derive from AAC-rich mRNA, which, due to a frameshift also have ACA and CAA codons and thus are Asn-, Thr- or Gln-rich.</text>
</comment>
<comment type="sequence caution" evidence="2">
    <conflict type="frameshift">
        <sequence resource="EMBL-CDS" id="CAA34529"/>
    </conflict>
</comment>
<name>AAC2_DICDI</name>